<sequence length="505" mass="54018">MRYEELDEACRSLEHLASDAEAEGEDAPLIPDPPGAVSPPTSLSGKAVLQVILLCASATLTLDIGLTVVRAPKIRLFESILCQAYYRTHGNPLPVPMQNIPESQCKTKEIQSGVARLIGWQTVFDGIPAIFLAIPYGALSDSKGRRPVLLLCFLGLALSTAWALLVCWMQWPLELTWISSLFQCLGGGPAVATAVLEATIADVVPDDKRSTIYFQLQATVLISDILANPLSSVLMAHNAWTPCFLGVGIQALATVLLIALPETLDFAKGSRPSDASIYGCKEEEPTLRGCLAKNFRSIVSDRNVAGLVFSLLILTVSAESLDFLLQYVSQRYGWSIAQSAMLLSLRAVVEFGLLLVVGSLLLFTQSSGLRNPRQRDLLIARLSLGLIVAGLLILSLSPTVAPAILVYTLGAGFQPAIMSLLASLWKASNPSNLGSLYSTVAIILAVGGVISGPLISLMYRIGLSLGHGWVGLPYFVASGLCAGIAGVLLSVKLPEQEQKPRRRET</sequence>
<feature type="chain" id="PRO_0000444134" description="MFS efflux pump atnC">
    <location>
        <begin position="1"/>
        <end position="505"/>
    </location>
</feature>
<feature type="transmembrane region" description="Helical" evidence="1">
    <location>
        <begin position="48"/>
        <end position="68"/>
    </location>
</feature>
<feature type="transmembrane region" description="Helical" evidence="1">
    <location>
        <begin position="117"/>
        <end position="137"/>
    </location>
</feature>
<feature type="transmembrane region" description="Helical" evidence="1">
    <location>
        <begin position="148"/>
        <end position="168"/>
    </location>
</feature>
<feature type="transmembrane region" description="Helical" evidence="1">
    <location>
        <begin position="181"/>
        <end position="201"/>
    </location>
</feature>
<feature type="transmembrane region" description="Helical" evidence="1">
    <location>
        <begin position="216"/>
        <end position="236"/>
    </location>
</feature>
<feature type="transmembrane region" description="Helical" evidence="1">
    <location>
        <begin position="240"/>
        <end position="260"/>
    </location>
</feature>
<feature type="transmembrane region" description="Helical" evidence="1">
    <location>
        <begin position="304"/>
        <end position="324"/>
    </location>
</feature>
<feature type="transmembrane region" description="Helical" evidence="1">
    <location>
        <begin position="343"/>
        <end position="363"/>
    </location>
</feature>
<feature type="transmembrane region" description="Helical" evidence="1">
    <location>
        <begin position="377"/>
        <end position="399"/>
    </location>
</feature>
<feature type="transmembrane region" description="Helical" evidence="1">
    <location>
        <begin position="403"/>
        <end position="425"/>
    </location>
</feature>
<feature type="transmembrane region" description="Helical" evidence="1">
    <location>
        <begin position="439"/>
        <end position="459"/>
    </location>
</feature>
<feature type="transmembrane region" description="Helical" evidence="1">
    <location>
        <begin position="469"/>
        <end position="489"/>
    </location>
</feature>
<dbReference type="EMBL" id="BN001302">
    <property type="protein sequence ID" value="CBF73449.1"/>
    <property type="molecule type" value="Genomic_DNA"/>
</dbReference>
<dbReference type="EMBL" id="AACD01000135">
    <property type="protein sequence ID" value="EAA59536.1"/>
    <property type="status" value="ALT_SEQ"/>
    <property type="molecule type" value="Genomic_DNA"/>
</dbReference>
<dbReference type="SMR" id="C8V3Y8"/>
<dbReference type="STRING" id="227321.C8V3Y8"/>
<dbReference type="EnsemblFungi" id="CBF73449">
    <property type="protein sequence ID" value="CBF73449"/>
    <property type="gene ID" value="ANIA_11031"/>
</dbReference>
<dbReference type="VEuPathDB" id="FungiDB:AN11031"/>
<dbReference type="eggNOG" id="ENOG502QWBF">
    <property type="taxonomic scope" value="Eukaryota"/>
</dbReference>
<dbReference type="HOGENOM" id="CLU_013756_2_1_1"/>
<dbReference type="InParanoid" id="C8V3Y8"/>
<dbReference type="OMA" id="FFYRFCT"/>
<dbReference type="OrthoDB" id="194139at2759"/>
<dbReference type="Proteomes" id="UP000000560">
    <property type="component" value="Chromosome II"/>
</dbReference>
<dbReference type="GO" id="GO:0016020">
    <property type="term" value="C:membrane"/>
    <property type="evidence" value="ECO:0000318"/>
    <property type="project" value="GO_Central"/>
</dbReference>
<dbReference type="GO" id="GO:0022857">
    <property type="term" value="F:transmembrane transporter activity"/>
    <property type="evidence" value="ECO:0000318"/>
    <property type="project" value="GO_Central"/>
</dbReference>
<dbReference type="GO" id="GO:0055085">
    <property type="term" value="P:transmembrane transport"/>
    <property type="evidence" value="ECO:0000318"/>
    <property type="project" value="GO_Central"/>
</dbReference>
<dbReference type="CDD" id="cd06174">
    <property type="entry name" value="MFS"/>
    <property type="match status" value="1"/>
</dbReference>
<dbReference type="Gene3D" id="1.20.1250.20">
    <property type="entry name" value="MFS general substrate transporter like domains"/>
    <property type="match status" value="1"/>
</dbReference>
<dbReference type="InterPro" id="IPR011701">
    <property type="entry name" value="MFS"/>
</dbReference>
<dbReference type="InterPro" id="IPR020846">
    <property type="entry name" value="MFS_dom"/>
</dbReference>
<dbReference type="InterPro" id="IPR036259">
    <property type="entry name" value="MFS_trans_sf"/>
</dbReference>
<dbReference type="PANTHER" id="PTHR23507:SF1">
    <property type="entry name" value="FI18259P1-RELATED"/>
    <property type="match status" value="1"/>
</dbReference>
<dbReference type="PANTHER" id="PTHR23507">
    <property type="entry name" value="ZGC:174356"/>
    <property type="match status" value="1"/>
</dbReference>
<dbReference type="Pfam" id="PF07690">
    <property type="entry name" value="MFS_1"/>
    <property type="match status" value="1"/>
</dbReference>
<dbReference type="SUPFAM" id="SSF103473">
    <property type="entry name" value="MFS general substrate transporter"/>
    <property type="match status" value="1"/>
</dbReference>
<dbReference type="PROSITE" id="PS50850">
    <property type="entry name" value="MFS"/>
    <property type="match status" value="1"/>
</dbReference>
<keyword id="KW-0472">Membrane</keyword>
<keyword id="KW-1185">Reference proteome</keyword>
<keyword id="KW-0812">Transmembrane</keyword>
<keyword id="KW-1133">Transmembrane helix</keyword>
<keyword id="KW-0813">Transport</keyword>
<evidence type="ECO:0000255" key="1"/>
<evidence type="ECO:0000269" key="2">
    <source>
    </source>
</evidence>
<evidence type="ECO:0000269" key="3">
    <source>
    </source>
</evidence>
<evidence type="ECO:0000269" key="4">
    <source>
    </source>
</evidence>
<evidence type="ECO:0000303" key="5">
    <source>
    </source>
</evidence>
<evidence type="ECO:0000305" key="6"/>
<proteinExistence type="evidence at transcript level"/>
<name>ATNC_EMENI</name>
<reference key="1">
    <citation type="journal article" date="2005" name="Nature">
        <title>Sequencing of Aspergillus nidulans and comparative analysis with A. fumigatus and A. oryzae.</title>
        <authorList>
            <person name="Galagan J.E."/>
            <person name="Calvo S.E."/>
            <person name="Cuomo C."/>
            <person name="Ma L.-J."/>
            <person name="Wortman J.R."/>
            <person name="Batzoglou S."/>
            <person name="Lee S.-I."/>
            <person name="Bastuerkmen M."/>
            <person name="Spevak C.C."/>
            <person name="Clutterbuck J."/>
            <person name="Kapitonov V."/>
            <person name="Jurka J."/>
            <person name="Scazzocchio C."/>
            <person name="Farman M.L."/>
            <person name="Butler J."/>
            <person name="Purcell S."/>
            <person name="Harris S."/>
            <person name="Braus G.H."/>
            <person name="Draht O."/>
            <person name="Busch S."/>
            <person name="D'Enfert C."/>
            <person name="Bouchier C."/>
            <person name="Goldman G.H."/>
            <person name="Bell-Pedersen D."/>
            <person name="Griffiths-Jones S."/>
            <person name="Doonan J.H."/>
            <person name="Yu J."/>
            <person name="Vienken K."/>
            <person name="Pain A."/>
            <person name="Freitag M."/>
            <person name="Selker E.U."/>
            <person name="Archer D.B."/>
            <person name="Penalva M.A."/>
            <person name="Oakley B.R."/>
            <person name="Momany M."/>
            <person name="Tanaka T."/>
            <person name="Kumagai T."/>
            <person name="Asai K."/>
            <person name="Machida M."/>
            <person name="Nierman W.C."/>
            <person name="Denning D.W."/>
            <person name="Caddick M.X."/>
            <person name="Hynes M."/>
            <person name="Paoletti M."/>
            <person name="Fischer R."/>
            <person name="Miller B.L."/>
            <person name="Dyer P.S."/>
            <person name="Sachs M.S."/>
            <person name="Osmani S.A."/>
            <person name="Birren B.W."/>
        </authorList>
    </citation>
    <scope>NUCLEOTIDE SEQUENCE [LARGE SCALE GENOMIC DNA]</scope>
    <source>
        <strain>FGSC A4 / ATCC 38163 / CBS 112.46 / NRRL 194 / M139</strain>
    </source>
</reference>
<reference key="2">
    <citation type="journal article" date="2009" name="Fungal Genet. Biol.">
        <title>The 2008 update of the Aspergillus nidulans genome annotation: a community effort.</title>
        <authorList>
            <person name="Wortman J.R."/>
            <person name="Gilsenan J.M."/>
            <person name="Joardar V."/>
            <person name="Deegan J."/>
            <person name="Clutterbuck J."/>
            <person name="Andersen M.R."/>
            <person name="Archer D."/>
            <person name="Bencina M."/>
            <person name="Braus G."/>
            <person name="Coutinho P."/>
            <person name="von Dohren H."/>
            <person name="Doonan J."/>
            <person name="Driessen A.J."/>
            <person name="Durek P."/>
            <person name="Espeso E."/>
            <person name="Fekete E."/>
            <person name="Flipphi M."/>
            <person name="Estrada C.G."/>
            <person name="Geysens S."/>
            <person name="Goldman G."/>
            <person name="de Groot P.W."/>
            <person name="Hansen K."/>
            <person name="Harris S.D."/>
            <person name="Heinekamp T."/>
            <person name="Helmstaedt K."/>
            <person name="Henrissat B."/>
            <person name="Hofmann G."/>
            <person name="Homan T."/>
            <person name="Horio T."/>
            <person name="Horiuchi H."/>
            <person name="James S."/>
            <person name="Jones M."/>
            <person name="Karaffa L."/>
            <person name="Karanyi Z."/>
            <person name="Kato M."/>
            <person name="Keller N."/>
            <person name="Kelly D.E."/>
            <person name="Kiel J.A."/>
            <person name="Kim J.M."/>
            <person name="van der Klei I.J."/>
            <person name="Klis F.M."/>
            <person name="Kovalchuk A."/>
            <person name="Krasevec N."/>
            <person name="Kubicek C.P."/>
            <person name="Liu B."/>
            <person name="Maccabe A."/>
            <person name="Meyer V."/>
            <person name="Mirabito P."/>
            <person name="Miskei M."/>
            <person name="Mos M."/>
            <person name="Mullins J."/>
            <person name="Nelson D.R."/>
            <person name="Nielsen J."/>
            <person name="Oakley B.R."/>
            <person name="Osmani S.A."/>
            <person name="Pakula T."/>
            <person name="Paszewski A."/>
            <person name="Paulsen I."/>
            <person name="Pilsyk S."/>
            <person name="Pocsi I."/>
            <person name="Punt P.J."/>
            <person name="Ram A.F."/>
            <person name="Ren Q."/>
            <person name="Robellet X."/>
            <person name="Robson G."/>
            <person name="Seiboth B."/>
            <person name="van Solingen P."/>
            <person name="Specht T."/>
            <person name="Sun J."/>
            <person name="Taheri-Talesh N."/>
            <person name="Takeshita N."/>
            <person name="Ussery D."/>
            <person name="vanKuyk P.A."/>
            <person name="Visser H."/>
            <person name="van de Vondervoort P.J."/>
            <person name="de Vries R.P."/>
            <person name="Walton J."/>
            <person name="Xiang X."/>
            <person name="Xiong Y."/>
            <person name="Zeng A.P."/>
            <person name="Brandt B.W."/>
            <person name="Cornell M.J."/>
            <person name="van den Hondel C.A."/>
            <person name="Visser J."/>
            <person name="Oliver S.G."/>
            <person name="Turner G."/>
        </authorList>
    </citation>
    <scope>GENOME REANNOTATION</scope>
    <source>
        <strain>FGSC A4 / ATCC 38163 / CBS 112.46 / NRRL 194 / M139</strain>
    </source>
</reference>
<reference key="3">
    <citation type="journal article" date="2013" name="Proc. Natl. Acad. Sci. U.S.A.">
        <title>Accurate prediction of secondary metabolite gene clusters in filamentous fungi.</title>
        <authorList>
            <person name="Andersen M.R."/>
            <person name="Nielsen J.B."/>
            <person name="Klitgaard A."/>
            <person name="Petersen L.M."/>
            <person name="Zachariasen M."/>
            <person name="Hansen T.J."/>
            <person name="Blicher L.H."/>
            <person name="Gotfredsen C.H."/>
            <person name="Larsen T.O."/>
            <person name="Nielsen K.F."/>
            <person name="Mortensen U.H."/>
        </authorList>
    </citation>
    <scope>IDENTIFICATION OF THE CLUSTER</scope>
</reference>
<reference key="4">
    <citation type="journal article" date="2016" name="ACS Chem. Biol.">
        <title>New aspercryptins, lipopeptide natural products, revealed by HDAC inhibition in Aspergillus nidulans.</title>
        <authorList>
            <person name="Henke M.T."/>
            <person name="Soukup A.A."/>
            <person name="Goering A.W."/>
            <person name="McClure R.A."/>
            <person name="Thomson R.J."/>
            <person name="Keller N.P."/>
            <person name="Kelleher N.L."/>
        </authorList>
    </citation>
    <scope>FUNCTION</scope>
    <scope>INDUCTION</scope>
</reference>
<reference key="5">
    <citation type="journal article" date="2016" name="Angew. Chem. Int. Ed.">
        <title>Development of genetic dereplication strains in Aspergillus nidulans results in the discovery of aspercryptin.</title>
        <authorList>
            <person name="Chiang Y.M."/>
            <person name="Ahuja M."/>
            <person name="Oakley C.E."/>
            <person name="Entwistle R."/>
            <person name="Asokan A."/>
            <person name="Zutz C."/>
            <person name="Wang C.C."/>
            <person name="Oakley B.R."/>
        </authorList>
    </citation>
    <scope>FUNCTION</scope>
    <scope>DISRUPTION PHENOTYPE</scope>
    <scope>PATHWAY</scope>
</reference>
<organism>
    <name type="scientific">Emericella nidulans (strain FGSC A4 / ATCC 38163 / CBS 112.46 / NRRL 194 / M139)</name>
    <name type="common">Aspergillus nidulans</name>
    <dbReference type="NCBI Taxonomy" id="227321"/>
    <lineage>
        <taxon>Eukaryota</taxon>
        <taxon>Fungi</taxon>
        <taxon>Dikarya</taxon>
        <taxon>Ascomycota</taxon>
        <taxon>Pezizomycotina</taxon>
        <taxon>Eurotiomycetes</taxon>
        <taxon>Eurotiomycetidae</taxon>
        <taxon>Eurotiales</taxon>
        <taxon>Aspergillaceae</taxon>
        <taxon>Aspergillus</taxon>
        <taxon>Aspergillus subgen. Nidulantes</taxon>
    </lineage>
</organism>
<gene>
    <name evidence="5" type="primary">atnC</name>
    <name type="ORF">AN7882</name>
    <name type="ORF">ANIA_11031</name>
</gene>
<comment type="function">
    <text evidence="2 3 4">MFS efflux pump; part of the gene cluster that mediates the biosynthesis of aspercryptins, linear lipopeptides built from six amino acids including 2 highly unusual and nonproteogenic amino acids, 2-amino-octanoic acid (2aoa) and 2-amino-dodecanol (2adol) (PubMed:23248299, PubMed:26563584, PubMed:27310134).</text>
</comment>
<comment type="pathway">
    <text evidence="3">Secondary metabolite biosynthesis.</text>
</comment>
<comment type="subcellular location">
    <subcellularLocation>
        <location evidence="1">Membrane</location>
        <topology evidence="1">Multi-pass membrane protein</topology>
    </subcellularLocation>
</comment>
<comment type="induction">
    <text evidence="4">Expression is positively regulated by the aspercryptin cluser-specific transcription factor atnN (PubMed:27310134).</text>
</comment>
<comment type="disruption phenotype">
    <text evidence="3">Does not alter the yield of aspercryptin significantly (PubMed:26563584).</text>
</comment>
<comment type="similarity">
    <text evidence="6">Belongs to the major facilitator superfamily.</text>
</comment>
<comment type="sequence caution" evidence="6">
    <conflict type="erroneous gene model prediction">
        <sequence resource="EMBL-CDS" id="EAA59536"/>
    </conflict>
</comment>
<accession>C8V3Y8</accession>
<accession>Q5AUZ8</accession>
<protein>
    <recommendedName>
        <fullName evidence="5">MFS efflux pump atnC</fullName>
    </recommendedName>
    <alternativeName>
        <fullName evidence="5">Aspercryptin biosynthesis cluster protein C</fullName>
    </alternativeName>
</protein>